<accession>A1W9F0</accession>
<reference key="1">
    <citation type="submission" date="2006-12" db="EMBL/GenBank/DDBJ databases">
        <title>Complete sequence of chromosome 1 of Acidovorax sp. JS42.</title>
        <authorList>
            <person name="Copeland A."/>
            <person name="Lucas S."/>
            <person name="Lapidus A."/>
            <person name="Barry K."/>
            <person name="Detter J.C."/>
            <person name="Glavina del Rio T."/>
            <person name="Dalin E."/>
            <person name="Tice H."/>
            <person name="Pitluck S."/>
            <person name="Chertkov O."/>
            <person name="Brettin T."/>
            <person name="Bruce D."/>
            <person name="Han C."/>
            <person name="Tapia R."/>
            <person name="Gilna P."/>
            <person name="Schmutz J."/>
            <person name="Larimer F."/>
            <person name="Land M."/>
            <person name="Hauser L."/>
            <person name="Kyrpides N."/>
            <person name="Kim E."/>
            <person name="Stahl D."/>
            <person name="Richardson P."/>
        </authorList>
    </citation>
    <scope>NUCLEOTIDE SEQUENCE [LARGE SCALE GENOMIC DNA]</scope>
    <source>
        <strain>JS42</strain>
    </source>
</reference>
<feature type="chain" id="PRO_1000001865" description="Glutamate--tRNA ligase">
    <location>
        <begin position="1"/>
        <end position="469"/>
    </location>
</feature>
<feature type="short sequence motif" description="'HIGH' region" evidence="1">
    <location>
        <begin position="12"/>
        <end position="22"/>
    </location>
</feature>
<feature type="short sequence motif" description="'KMSKS' region" evidence="1">
    <location>
        <begin position="244"/>
        <end position="248"/>
    </location>
</feature>
<feature type="binding site" evidence="1">
    <location>
        <position position="247"/>
    </location>
    <ligand>
        <name>ATP</name>
        <dbReference type="ChEBI" id="CHEBI:30616"/>
    </ligand>
</feature>
<name>SYE_ACISJ</name>
<organism>
    <name type="scientific">Acidovorax sp. (strain JS42)</name>
    <dbReference type="NCBI Taxonomy" id="232721"/>
    <lineage>
        <taxon>Bacteria</taxon>
        <taxon>Pseudomonadati</taxon>
        <taxon>Pseudomonadota</taxon>
        <taxon>Betaproteobacteria</taxon>
        <taxon>Burkholderiales</taxon>
        <taxon>Comamonadaceae</taxon>
        <taxon>Acidovorax</taxon>
    </lineage>
</organism>
<comment type="function">
    <text evidence="1">Catalyzes the attachment of glutamate to tRNA(Glu) in a two-step reaction: glutamate is first activated by ATP to form Glu-AMP and then transferred to the acceptor end of tRNA(Glu).</text>
</comment>
<comment type="catalytic activity">
    <reaction evidence="1">
        <text>tRNA(Glu) + L-glutamate + ATP = L-glutamyl-tRNA(Glu) + AMP + diphosphate</text>
        <dbReference type="Rhea" id="RHEA:23540"/>
        <dbReference type="Rhea" id="RHEA-COMP:9663"/>
        <dbReference type="Rhea" id="RHEA-COMP:9680"/>
        <dbReference type="ChEBI" id="CHEBI:29985"/>
        <dbReference type="ChEBI" id="CHEBI:30616"/>
        <dbReference type="ChEBI" id="CHEBI:33019"/>
        <dbReference type="ChEBI" id="CHEBI:78442"/>
        <dbReference type="ChEBI" id="CHEBI:78520"/>
        <dbReference type="ChEBI" id="CHEBI:456215"/>
        <dbReference type="EC" id="6.1.1.17"/>
    </reaction>
</comment>
<comment type="subunit">
    <text evidence="1">Monomer.</text>
</comment>
<comment type="subcellular location">
    <subcellularLocation>
        <location evidence="1">Cytoplasm</location>
    </subcellularLocation>
</comment>
<comment type="similarity">
    <text evidence="1">Belongs to the class-I aminoacyl-tRNA synthetase family. Glutamate--tRNA ligase type 1 subfamily.</text>
</comment>
<gene>
    <name evidence="1" type="primary">gltX</name>
    <name type="ordered locus">Ajs_2734</name>
</gene>
<proteinExistence type="inferred from homology"/>
<keyword id="KW-0030">Aminoacyl-tRNA synthetase</keyword>
<keyword id="KW-0067">ATP-binding</keyword>
<keyword id="KW-0963">Cytoplasm</keyword>
<keyword id="KW-0436">Ligase</keyword>
<keyword id="KW-0547">Nucleotide-binding</keyword>
<keyword id="KW-0648">Protein biosynthesis</keyword>
<protein>
    <recommendedName>
        <fullName evidence="1">Glutamate--tRNA ligase</fullName>
        <ecNumber evidence="1">6.1.1.17</ecNumber>
    </recommendedName>
    <alternativeName>
        <fullName evidence="1">Glutamyl-tRNA synthetase</fullName>
        <shortName evidence="1">GluRS</shortName>
    </alternativeName>
</protein>
<dbReference type="EC" id="6.1.1.17" evidence="1"/>
<dbReference type="EMBL" id="CP000539">
    <property type="protein sequence ID" value="ABM42875.1"/>
    <property type="molecule type" value="Genomic_DNA"/>
</dbReference>
<dbReference type="SMR" id="A1W9F0"/>
<dbReference type="STRING" id="232721.Ajs_2734"/>
<dbReference type="KEGG" id="ajs:Ajs_2734"/>
<dbReference type="eggNOG" id="COG0008">
    <property type="taxonomic scope" value="Bacteria"/>
</dbReference>
<dbReference type="HOGENOM" id="CLU_015768_6_1_4"/>
<dbReference type="Proteomes" id="UP000000645">
    <property type="component" value="Chromosome"/>
</dbReference>
<dbReference type="GO" id="GO:0005829">
    <property type="term" value="C:cytosol"/>
    <property type="evidence" value="ECO:0007669"/>
    <property type="project" value="TreeGrafter"/>
</dbReference>
<dbReference type="GO" id="GO:0005524">
    <property type="term" value="F:ATP binding"/>
    <property type="evidence" value="ECO:0007669"/>
    <property type="project" value="UniProtKB-UniRule"/>
</dbReference>
<dbReference type="GO" id="GO:0004818">
    <property type="term" value="F:glutamate-tRNA ligase activity"/>
    <property type="evidence" value="ECO:0007669"/>
    <property type="project" value="UniProtKB-UniRule"/>
</dbReference>
<dbReference type="GO" id="GO:0000049">
    <property type="term" value="F:tRNA binding"/>
    <property type="evidence" value="ECO:0007669"/>
    <property type="project" value="InterPro"/>
</dbReference>
<dbReference type="GO" id="GO:0008270">
    <property type="term" value="F:zinc ion binding"/>
    <property type="evidence" value="ECO:0007669"/>
    <property type="project" value="InterPro"/>
</dbReference>
<dbReference type="GO" id="GO:0006424">
    <property type="term" value="P:glutamyl-tRNA aminoacylation"/>
    <property type="evidence" value="ECO:0007669"/>
    <property type="project" value="UniProtKB-UniRule"/>
</dbReference>
<dbReference type="CDD" id="cd00808">
    <property type="entry name" value="GluRS_core"/>
    <property type="match status" value="1"/>
</dbReference>
<dbReference type="FunFam" id="3.40.50.620:FF:000007">
    <property type="entry name" value="Glutamate--tRNA ligase"/>
    <property type="match status" value="1"/>
</dbReference>
<dbReference type="Gene3D" id="1.10.10.350">
    <property type="match status" value="1"/>
</dbReference>
<dbReference type="Gene3D" id="1.10.8.70">
    <property type="entry name" value="Glutamate-tRNA synthetase, class I, anticodon-binding domain 1"/>
    <property type="match status" value="1"/>
</dbReference>
<dbReference type="Gene3D" id="3.40.50.620">
    <property type="entry name" value="HUPs"/>
    <property type="match status" value="1"/>
</dbReference>
<dbReference type="HAMAP" id="MF_00022">
    <property type="entry name" value="Glu_tRNA_synth_type1"/>
    <property type="match status" value="1"/>
</dbReference>
<dbReference type="InterPro" id="IPR045462">
    <property type="entry name" value="aa-tRNA-synth_I_cd-bd"/>
</dbReference>
<dbReference type="InterPro" id="IPR020751">
    <property type="entry name" value="aa-tRNA-synth_I_codon-bd_sub2"/>
</dbReference>
<dbReference type="InterPro" id="IPR001412">
    <property type="entry name" value="aa-tRNA-synth_I_CS"/>
</dbReference>
<dbReference type="InterPro" id="IPR008925">
    <property type="entry name" value="aa_tRNA-synth_I_cd-bd_sf"/>
</dbReference>
<dbReference type="InterPro" id="IPR004527">
    <property type="entry name" value="Glu-tRNA-ligase_bac/mito"/>
</dbReference>
<dbReference type="InterPro" id="IPR020752">
    <property type="entry name" value="Glu-tRNA-synth_I_codon-bd_sub1"/>
</dbReference>
<dbReference type="InterPro" id="IPR000924">
    <property type="entry name" value="Glu/Gln-tRNA-synth"/>
</dbReference>
<dbReference type="InterPro" id="IPR020058">
    <property type="entry name" value="Glu/Gln-tRNA-synth_Ib_cat-dom"/>
</dbReference>
<dbReference type="InterPro" id="IPR049940">
    <property type="entry name" value="GluQ/Sye"/>
</dbReference>
<dbReference type="InterPro" id="IPR033910">
    <property type="entry name" value="GluRS_core"/>
</dbReference>
<dbReference type="InterPro" id="IPR014729">
    <property type="entry name" value="Rossmann-like_a/b/a_fold"/>
</dbReference>
<dbReference type="NCBIfam" id="TIGR00464">
    <property type="entry name" value="gltX_bact"/>
    <property type="match status" value="1"/>
</dbReference>
<dbReference type="PANTHER" id="PTHR43311">
    <property type="entry name" value="GLUTAMATE--TRNA LIGASE"/>
    <property type="match status" value="1"/>
</dbReference>
<dbReference type="PANTHER" id="PTHR43311:SF2">
    <property type="entry name" value="GLUTAMATE--TRNA LIGASE, MITOCHONDRIAL-RELATED"/>
    <property type="match status" value="1"/>
</dbReference>
<dbReference type="Pfam" id="PF19269">
    <property type="entry name" value="Anticodon_2"/>
    <property type="match status" value="1"/>
</dbReference>
<dbReference type="Pfam" id="PF00749">
    <property type="entry name" value="tRNA-synt_1c"/>
    <property type="match status" value="1"/>
</dbReference>
<dbReference type="PRINTS" id="PR00987">
    <property type="entry name" value="TRNASYNTHGLU"/>
</dbReference>
<dbReference type="SUPFAM" id="SSF48163">
    <property type="entry name" value="An anticodon-binding domain of class I aminoacyl-tRNA synthetases"/>
    <property type="match status" value="1"/>
</dbReference>
<dbReference type="SUPFAM" id="SSF52374">
    <property type="entry name" value="Nucleotidylyl transferase"/>
    <property type="match status" value="1"/>
</dbReference>
<dbReference type="PROSITE" id="PS00178">
    <property type="entry name" value="AA_TRNA_LIGASE_I"/>
    <property type="match status" value="1"/>
</dbReference>
<evidence type="ECO:0000255" key="1">
    <source>
        <dbReference type="HAMAP-Rule" id="MF_00022"/>
    </source>
</evidence>
<sequence length="469" mass="52897">MTQQQVRTRFAPSPTGFIHLGNIRSALYPWAFARANDGVFILRIEDTDLERSTQASVDVILEGMSWLQLDHDEGPYYQMQRMERYKEVLAQLQAAGHVYPCYMSVEELDALRERQMAAKEKPRYDGTWRPEPGKVLPPVPEGVKPVLRFKTPQGGVVGWDDKCKGRIEFQNSELDDLVIARPDGTPTYNFCVCVDDMDMRITHVIRGDDHVNNTPRQIHIFEALGATVPVFAHLPTVLNEQGEKMSKRNGAKAVTQYRDEGYLPDAMVNYLARLGWSHGDDEIFSRAQFLEWFNLDHLGRSAGQFDEAKLRWVNAQHLKAMEDAQLAALVRPFVVQAGVPETQLDADDRLPRICALFKDRCETLVDLARWARVFYVDAIEPDADDFAKHVTETAAPALDAFAAAMETVAWNKDAINAAIKDVLKQLGLKMPQLAMPVRVLTMGTAHTPSVDAVLELLGREKILARLKSR</sequence>